<dbReference type="EC" id="3.6.1.54" evidence="1"/>
<dbReference type="EMBL" id="AP009240">
    <property type="protein sequence ID" value="BAG76073.1"/>
    <property type="molecule type" value="Genomic_DNA"/>
</dbReference>
<dbReference type="RefSeq" id="WP_000212253.1">
    <property type="nucleotide sequence ID" value="NC_011415.1"/>
</dbReference>
<dbReference type="SMR" id="B6I0G9"/>
<dbReference type="KEGG" id="ecy:ECSE_0549"/>
<dbReference type="HOGENOM" id="CLU_074586_0_0_6"/>
<dbReference type="UniPathway" id="UPA00359">
    <property type="reaction ID" value="UER00480"/>
</dbReference>
<dbReference type="Proteomes" id="UP000008199">
    <property type="component" value="Chromosome"/>
</dbReference>
<dbReference type="GO" id="GO:0005737">
    <property type="term" value="C:cytoplasm"/>
    <property type="evidence" value="ECO:0007669"/>
    <property type="project" value="InterPro"/>
</dbReference>
<dbReference type="GO" id="GO:0019897">
    <property type="term" value="C:extrinsic component of plasma membrane"/>
    <property type="evidence" value="ECO:0007669"/>
    <property type="project" value="UniProtKB-UniRule"/>
</dbReference>
<dbReference type="GO" id="GO:0030145">
    <property type="term" value="F:manganese ion binding"/>
    <property type="evidence" value="ECO:0007669"/>
    <property type="project" value="UniProtKB-UniRule"/>
</dbReference>
<dbReference type="GO" id="GO:0008758">
    <property type="term" value="F:UDP-2,3-diacylglucosamine hydrolase activity"/>
    <property type="evidence" value="ECO:0007669"/>
    <property type="project" value="UniProtKB-UniRule"/>
</dbReference>
<dbReference type="GO" id="GO:0009245">
    <property type="term" value="P:lipid A biosynthetic process"/>
    <property type="evidence" value="ECO:0007669"/>
    <property type="project" value="UniProtKB-UniRule"/>
</dbReference>
<dbReference type="CDD" id="cd07398">
    <property type="entry name" value="MPP_YbbF-LpxH"/>
    <property type="match status" value="1"/>
</dbReference>
<dbReference type="FunFam" id="3.60.21.10:FF:000012">
    <property type="entry name" value="UDP-2,3-diacylglucosamine hydrolase"/>
    <property type="match status" value="1"/>
</dbReference>
<dbReference type="Gene3D" id="3.60.21.10">
    <property type="match status" value="1"/>
</dbReference>
<dbReference type="HAMAP" id="MF_00575">
    <property type="entry name" value="LpxH"/>
    <property type="match status" value="1"/>
</dbReference>
<dbReference type="InterPro" id="IPR004843">
    <property type="entry name" value="Calcineurin-like_PHP_ApaH"/>
</dbReference>
<dbReference type="InterPro" id="IPR043461">
    <property type="entry name" value="LpxH-like"/>
</dbReference>
<dbReference type="InterPro" id="IPR029052">
    <property type="entry name" value="Metallo-depent_PP-like"/>
</dbReference>
<dbReference type="InterPro" id="IPR010138">
    <property type="entry name" value="UDP-diacylglucosamine_Hdrlase"/>
</dbReference>
<dbReference type="NCBIfam" id="TIGR01854">
    <property type="entry name" value="lipid_A_lpxH"/>
    <property type="match status" value="1"/>
</dbReference>
<dbReference type="NCBIfam" id="NF003743">
    <property type="entry name" value="PRK05340.1"/>
    <property type="match status" value="1"/>
</dbReference>
<dbReference type="PANTHER" id="PTHR34990:SF1">
    <property type="entry name" value="UDP-2,3-DIACYLGLUCOSAMINE HYDROLASE"/>
    <property type="match status" value="1"/>
</dbReference>
<dbReference type="PANTHER" id="PTHR34990">
    <property type="entry name" value="UDP-2,3-DIACYLGLUCOSAMINE HYDROLASE-RELATED"/>
    <property type="match status" value="1"/>
</dbReference>
<dbReference type="Pfam" id="PF00149">
    <property type="entry name" value="Metallophos"/>
    <property type="match status" value="1"/>
</dbReference>
<dbReference type="SUPFAM" id="SSF56300">
    <property type="entry name" value="Metallo-dependent phosphatases"/>
    <property type="match status" value="1"/>
</dbReference>
<organism>
    <name type="scientific">Escherichia coli (strain SE11)</name>
    <dbReference type="NCBI Taxonomy" id="409438"/>
    <lineage>
        <taxon>Bacteria</taxon>
        <taxon>Pseudomonadati</taxon>
        <taxon>Pseudomonadota</taxon>
        <taxon>Gammaproteobacteria</taxon>
        <taxon>Enterobacterales</taxon>
        <taxon>Enterobacteriaceae</taxon>
        <taxon>Escherichia</taxon>
    </lineage>
</organism>
<feature type="chain" id="PRO_1000129523" description="UDP-2,3-diacylglucosamine hydrolase">
    <location>
        <begin position="1"/>
        <end position="240"/>
    </location>
</feature>
<feature type="binding site" evidence="1">
    <location>
        <position position="8"/>
    </location>
    <ligand>
        <name>Mn(2+)</name>
        <dbReference type="ChEBI" id="CHEBI:29035"/>
        <label>1</label>
    </ligand>
</feature>
<feature type="binding site" evidence="1">
    <location>
        <position position="10"/>
    </location>
    <ligand>
        <name>Mn(2+)</name>
        <dbReference type="ChEBI" id="CHEBI:29035"/>
        <label>1</label>
    </ligand>
</feature>
<feature type="binding site" evidence="1">
    <location>
        <position position="41"/>
    </location>
    <ligand>
        <name>Mn(2+)</name>
        <dbReference type="ChEBI" id="CHEBI:29035"/>
        <label>1</label>
    </ligand>
</feature>
<feature type="binding site" evidence="1">
    <location>
        <position position="41"/>
    </location>
    <ligand>
        <name>Mn(2+)</name>
        <dbReference type="ChEBI" id="CHEBI:29035"/>
        <label>2</label>
    </ligand>
</feature>
<feature type="binding site" evidence="1">
    <location>
        <begin position="79"/>
        <end position="80"/>
    </location>
    <ligand>
        <name>substrate</name>
    </ligand>
</feature>
<feature type="binding site" evidence="1">
    <location>
        <position position="79"/>
    </location>
    <ligand>
        <name>Mn(2+)</name>
        <dbReference type="ChEBI" id="CHEBI:29035"/>
        <label>2</label>
    </ligand>
</feature>
<feature type="binding site" evidence="1">
    <location>
        <position position="114"/>
    </location>
    <ligand>
        <name>Mn(2+)</name>
        <dbReference type="ChEBI" id="CHEBI:29035"/>
        <label>2</label>
    </ligand>
</feature>
<feature type="binding site" evidence="1">
    <location>
        <position position="122"/>
    </location>
    <ligand>
        <name>substrate</name>
    </ligand>
</feature>
<feature type="binding site" evidence="1">
    <location>
        <position position="160"/>
    </location>
    <ligand>
        <name>substrate</name>
    </ligand>
</feature>
<feature type="binding site" evidence="1">
    <location>
        <position position="164"/>
    </location>
    <ligand>
        <name>substrate</name>
    </ligand>
</feature>
<feature type="binding site" evidence="1">
    <location>
        <position position="167"/>
    </location>
    <ligand>
        <name>substrate</name>
    </ligand>
</feature>
<feature type="binding site" evidence="1">
    <location>
        <position position="195"/>
    </location>
    <ligand>
        <name>Mn(2+)</name>
        <dbReference type="ChEBI" id="CHEBI:29035"/>
        <label>2</label>
    </ligand>
</feature>
<feature type="binding site" evidence="1">
    <location>
        <position position="195"/>
    </location>
    <ligand>
        <name>substrate</name>
    </ligand>
</feature>
<feature type="binding site" evidence="1">
    <location>
        <position position="197"/>
    </location>
    <ligand>
        <name>Mn(2+)</name>
        <dbReference type="ChEBI" id="CHEBI:29035"/>
        <label>1</label>
    </ligand>
</feature>
<protein>
    <recommendedName>
        <fullName evidence="1">UDP-2,3-diacylglucosamine hydrolase</fullName>
        <ecNumber evidence="1">3.6.1.54</ecNumber>
    </recommendedName>
    <alternativeName>
        <fullName evidence="1">UDP-2,3-diacylglucosamine diphosphatase</fullName>
    </alternativeName>
</protein>
<gene>
    <name evidence="1" type="primary">lpxH</name>
    <name type="ordered locus">ECSE_0549</name>
</gene>
<evidence type="ECO:0000255" key="1">
    <source>
        <dbReference type="HAMAP-Rule" id="MF_00575"/>
    </source>
</evidence>
<reference key="1">
    <citation type="journal article" date="2008" name="DNA Res.">
        <title>Complete genome sequence and comparative analysis of the wild-type commensal Escherichia coli strain SE11 isolated from a healthy adult.</title>
        <authorList>
            <person name="Oshima K."/>
            <person name="Toh H."/>
            <person name="Ogura Y."/>
            <person name="Sasamoto H."/>
            <person name="Morita H."/>
            <person name="Park S.-H."/>
            <person name="Ooka T."/>
            <person name="Iyoda S."/>
            <person name="Taylor T.D."/>
            <person name="Hayashi T."/>
            <person name="Itoh K."/>
            <person name="Hattori M."/>
        </authorList>
    </citation>
    <scope>NUCLEOTIDE SEQUENCE [LARGE SCALE GENOMIC DNA]</scope>
    <source>
        <strain>SE11</strain>
    </source>
</reference>
<name>LPXH_ECOSE</name>
<comment type="function">
    <text evidence="1">Hydrolyzes the pyrophosphate bond of UDP-2,3-diacylglucosamine to yield 2,3-diacylglucosamine 1-phosphate (lipid X) and UMP by catalyzing the attack of water at the alpha-P atom. Involved in the biosynthesis of lipid A, a phosphorylated glycolipid that anchors the lipopolysaccharide to the outer membrane of the cell.</text>
</comment>
<comment type="catalytic activity">
    <reaction evidence="1">
        <text>UDP-2-N,3-O-bis[(3R)-3-hydroxytetradecanoyl]-alpha-D-glucosamine + H2O = 2-N,3-O-bis[(3R)-3-hydroxytetradecanoyl]-alpha-D-glucosaminyl 1-phosphate + UMP + 2 H(+)</text>
        <dbReference type="Rhea" id="RHEA:25213"/>
        <dbReference type="ChEBI" id="CHEBI:15377"/>
        <dbReference type="ChEBI" id="CHEBI:15378"/>
        <dbReference type="ChEBI" id="CHEBI:57865"/>
        <dbReference type="ChEBI" id="CHEBI:57957"/>
        <dbReference type="ChEBI" id="CHEBI:78847"/>
        <dbReference type="EC" id="3.6.1.54"/>
    </reaction>
</comment>
<comment type="cofactor">
    <cofactor evidence="1">
        <name>Mn(2+)</name>
        <dbReference type="ChEBI" id="CHEBI:29035"/>
    </cofactor>
    <text evidence="1">Binds 2 Mn(2+) ions per subunit in a binuclear metal center.</text>
</comment>
<comment type="pathway">
    <text evidence="1">Glycolipid biosynthesis; lipid IV(A) biosynthesis; lipid IV(A) from (3R)-3-hydroxytetradecanoyl-[acyl-carrier-protein] and UDP-N-acetyl-alpha-D-glucosamine: step 4/6.</text>
</comment>
<comment type="subcellular location">
    <subcellularLocation>
        <location evidence="1">Cell inner membrane</location>
        <topology evidence="1">Peripheral membrane protein</topology>
        <orientation evidence="1">Cytoplasmic side</orientation>
    </subcellularLocation>
</comment>
<comment type="similarity">
    <text evidence="1">Belongs to the LpxH family.</text>
</comment>
<keyword id="KW-0997">Cell inner membrane</keyword>
<keyword id="KW-1003">Cell membrane</keyword>
<keyword id="KW-0378">Hydrolase</keyword>
<keyword id="KW-0441">Lipid A biosynthesis</keyword>
<keyword id="KW-0444">Lipid biosynthesis</keyword>
<keyword id="KW-0443">Lipid metabolism</keyword>
<keyword id="KW-0464">Manganese</keyword>
<keyword id="KW-0472">Membrane</keyword>
<keyword id="KW-0479">Metal-binding</keyword>
<sequence length="240" mass="26894">MATLFIADLHLCVEEPAITAGFLRFLAGEARKADALYILGDLFEAWIGDDDPNPLHRQMAAAIKAVSDSGVPCYFIHGNRDFLLGKRFARESGMTLLPEEKVLELYGRRVLIMHGDTLCTDDAGYQAFRAKVHKPWLQTLFLALPLFVRKRIAARMRANSKEANSSKSLAIMDVNQNAVVSAMEKHQVQWLIHGHTHRPAVHELIANQQPAFRVVLGAWHTEGSMVKVTADDVELIHFPF</sequence>
<proteinExistence type="inferred from homology"/>
<accession>B6I0G9</accession>